<proteinExistence type="inferred from homology"/>
<name>CHEB1_OLEA2</name>
<keyword id="KW-0145">Chemotaxis</keyword>
<keyword id="KW-0963">Cytoplasm</keyword>
<keyword id="KW-0378">Hydrolase</keyword>
<keyword id="KW-0597">Phosphoprotein</keyword>
<keyword id="KW-1185">Reference proteome</keyword>
<accession>Q311M8</accession>
<organism>
    <name type="scientific">Oleidesulfovibrio alaskensis (strain ATCC BAA-1058 / DSM 17464 / G20)</name>
    <name type="common">Desulfovibrio alaskensis</name>
    <dbReference type="NCBI Taxonomy" id="207559"/>
    <lineage>
        <taxon>Bacteria</taxon>
        <taxon>Pseudomonadati</taxon>
        <taxon>Thermodesulfobacteriota</taxon>
        <taxon>Desulfovibrionia</taxon>
        <taxon>Desulfovibrionales</taxon>
        <taxon>Desulfovibrionaceae</taxon>
        <taxon>Oleidesulfovibrio</taxon>
    </lineage>
</organism>
<dbReference type="EC" id="3.1.1.61" evidence="1"/>
<dbReference type="EC" id="3.5.1.44" evidence="1"/>
<dbReference type="EMBL" id="CP000112">
    <property type="protein sequence ID" value="ABB38368.1"/>
    <property type="molecule type" value="Genomic_DNA"/>
</dbReference>
<dbReference type="RefSeq" id="WP_011367528.1">
    <property type="nucleotide sequence ID" value="NC_007519.1"/>
</dbReference>
<dbReference type="SMR" id="Q311M8"/>
<dbReference type="STRING" id="207559.Dde_1571"/>
<dbReference type="KEGG" id="dde:Dde_1571"/>
<dbReference type="eggNOG" id="COG2201">
    <property type="taxonomic scope" value="Bacteria"/>
</dbReference>
<dbReference type="HOGENOM" id="CLU_000445_51_0_7"/>
<dbReference type="Proteomes" id="UP000002710">
    <property type="component" value="Chromosome"/>
</dbReference>
<dbReference type="GO" id="GO:0005737">
    <property type="term" value="C:cytoplasm"/>
    <property type="evidence" value="ECO:0007669"/>
    <property type="project" value="UniProtKB-SubCell"/>
</dbReference>
<dbReference type="GO" id="GO:0000156">
    <property type="term" value="F:phosphorelay response regulator activity"/>
    <property type="evidence" value="ECO:0007669"/>
    <property type="project" value="InterPro"/>
</dbReference>
<dbReference type="GO" id="GO:0008984">
    <property type="term" value="F:protein-glutamate methylesterase activity"/>
    <property type="evidence" value="ECO:0007669"/>
    <property type="project" value="UniProtKB-UniRule"/>
</dbReference>
<dbReference type="GO" id="GO:0050568">
    <property type="term" value="F:protein-glutamine glutaminase activity"/>
    <property type="evidence" value="ECO:0007669"/>
    <property type="project" value="UniProtKB-UniRule"/>
</dbReference>
<dbReference type="GO" id="GO:0006935">
    <property type="term" value="P:chemotaxis"/>
    <property type="evidence" value="ECO:0007669"/>
    <property type="project" value="UniProtKB-UniRule"/>
</dbReference>
<dbReference type="CDD" id="cd16432">
    <property type="entry name" value="CheB_Rec"/>
    <property type="match status" value="1"/>
</dbReference>
<dbReference type="CDD" id="cd17541">
    <property type="entry name" value="REC_CheB-like"/>
    <property type="match status" value="1"/>
</dbReference>
<dbReference type="Gene3D" id="3.40.50.2300">
    <property type="match status" value="1"/>
</dbReference>
<dbReference type="Gene3D" id="3.40.50.180">
    <property type="entry name" value="Methylesterase CheB, C-terminal domain"/>
    <property type="match status" value="1"/>
</dbReference>
<dbReference type="HAMAP" id="MF_00099">
    <property type="entry name" value="CheB_chemtxs"/>
    <property type="match status" value="1"/>
</dbReference>
<dbReference type="InterPro" id="IPR008248">
    <property type="entry name" value="CheB-like"/>
</dbReference>
<dbReference type="InterPro" id="IPR035909">
    <property type="entry name" value="CheB_C"/>
</dbReference>
<dbReference type="InterPro" id="IPR011006">
    <property type="entry name" value="CheY-like_superfamily"/>
</dbReference>
<dbReference type="InterPro" id="IPR000673">
    <property type="entry name" value="Sig_transdc_resp-reg_Me-estase"/>
</dbReference>
<dbReference type="InterPro" id="IPR001789">
    <property type="entry name" value="Sig_transdc_resp-reg_receiver"/>
</dbReference>
<dbReference type="NCBIfam" id="NF001965">
    <property type="entry name" value="PRK00742.1"/>
    <property type="match status" value="1"/>
</dbReference>
<dbReference type="PANTHER" id="PTHR42872">
    <property type="entry name" value="PROTEIN-GLUTAMATE METHYLESTERASE/PROTEIN-GLUTAMINE GLUTAMINASE"/>
    <property type="match status" value="1"/>
</dbReference>
<dbReference type="PANTHER" id="PTHR42872:SF3">
    <property type="entry name" value="PROTEIN-GLUTAMATE METHYLESTERASE_PROTEIN-GLUTAMINE GLUTAMINASE 1"/>
    <property type="match status" value="1"/>
</dbReference>
<dbReference type="Pfam" id="PF01339">
    <property type="entry name" value="CheB_methylest"/>
    <property type="match status" value="1"/>
</dbReference>
<dbReference type="Pfam" id="PF00072">
    <property type="entry name" value="Response_reg"/>
    <property type="match status" value="1"/>
</dbReference>
<dbReference type="PIRSF" id="PIRSF000876">
    <property type="entry name" value="RR_chemtxs_CheB"/>
    <property type="match status" value="1"/>
</dbReference>
<dbReference type="SMART" id="SM00448">
    <property type="entry name" value="REC"/>
    <property type="match status" value="1"/>
</dbReference>
<dbReference type="SUPFAM" id="SSF52172">
    <property type="entry name" value="CheY-like"/>
    <property type="match status" value="1"/>
</dbReference>
<dbReference type="SUPFAM" id="SSF52738">
    <property type="entry name" value="Methylesterase CheB, C-terminal domain"/>
    <property type="match status" value="1"/>
</dbReference>
<dbReference type="PROSITE" id="PS50122">
    <property type="entry name" value="CHEB"/>
    <property type="match status" value="1"/>
</dbReference>
<dbReference type="PROSITE" id="PS50110">
    <property type="entry name" value="RESPONSE_REGULATORY"/>
    <property type="match status" value="1"/>
</dbReference>
<sequence length="369" mass="38865">MIKVVVVDDSAFMRKALSSMLEKDPGISVVATARNGEEGLEQIRKHDPDVVTLDIEMPRMDGLTALRHIMMEMPRPVLMVSSLTVEGAEATLKAMELGAVDFIPKQLSTVSLDIVKIEKDLQEKVKAISRRRVPGRSFRPAPAVRPAAPAALRATPRPSAAPSSAASSTGTLQVAGGKPVRDVVAIGVSTGGPPAVQKVLSRLPQDFPVGIVIAQHMPAAFTGPFAKRLDGVCAIAVKEAEDGEMLMPGKAYIAPGGKHVRVRNTRGRLTLEVSAEPAEALYKPSANELMESAGLALGRRSLGVILTGMGSDGLEGIKVLKQKGGHALAQSDSTCVVYGMPKAIVDAGLADSVVDIDDMAQAIMNAVYK</sequence>
<comment type="function">
    <text evidence="1">Involved in chemotaxis. Part of a chemotaxis signal transduction system that modulates chemotaxis in response to various stimuli. Catalyzes the demethylation of specific methylglutamate residues introduced into the chemoreceptors (methyl-accepting chemotaxis proteins or MCP) by CheR. Also mediates the irreversible deamidation of specific glutamine residues to glutamic acid.</text>
</comment>
<comment type="catalytic activity">
    <reaction evidence="1">
        <text>[protein]-L-glutamate 5-O-methyl ester + H2O = L-glutamyl-[protein] + methanol + H(+)</text>
        <dbReference type="Rhea" id="RHEA:23236"/>
        <dbReference type="Rhea" id="RHEA-COMP:10208"/>
        <dbReference type="Rhea" id="RHEA-COMP:10311"/>
        <dbReference type="ChEBI" id="CHEBI:15377"/>
        <dbReference type="ChEBI" id="CHEBI:15378"/>
        <dbReference type="ChEBI" id="CHEBI:17790"/>
        <dbReference type="ChEBI" id="CHEBI:29973"/>
        <dbReference type="ChEBI" id="CHEBI:82795"/>
        <dbReference type="EC" id="3.1.1.61"/>
    </reaction>
</comment>
<comment type="catalytic activity">
    <reaction evidence="1">
        <text>L-glutaminyl-[protein] + H2O = L-glutamyl-[protein] + NH4(+)</text>
        <dbReference type="Rhea" id="RHEA:16441"/>
        <dbReference type="Rhea" id="RHEA-COMP:10207"/>
        <dbReference type="Rhea" id="RHEA-COMP:10208"/>
        <dbReference type="ChEBI" id="CHEBI:15377"/>
        <dbReference type="ChEBI" id="CHEBI:28938"/>
        <dbReference type="ChEBI" id="CHEBI:29973"/>
        <dbReference type="ChEBI" id="CHEBI:30011"/>
        <dbReference type="EC" id="3.5.1.44"/>
    </reaction>
</comment>
<comment type="subcellular location">
    <subcellularLocation>
        <location evidence="1">Cytoplasm</location>
    </subcellularLocation>
</comment>
<comment type="domain">
    <text evidence="1">Contains a C-terminal catalytic domain, and an N-terminal region which modulates catalytic activity.</text>
</comment>
<comment type="PTM">
    <text evidence="1">Phosphorylated by CheA. Phosphorylation of the N-terminal regulatory domain activates the methylesterase activity.</text>
</comment>
<comment type="similarity">
    <text evidence="1">Belongs to the CheB family.</text>
</comment>
<protein>
    <recommendedName>
        <fullName evidence="1">Protein-glutamate methylesterase/protein-glutamine glutaminase 1</fullName>
        <ecNumber evidence="1">3.1.1.61</ecNumber>
        <ecNumber evidence="1">3.5.1.44</ecNumber>
    </recommendedName>
</protein>
<gene>
    <name evidence="1" type="primary">cheB1</name>
    <name type="ordered locus">Dde_1571</name>
</gene>
<feature type="chain" id="PRO_0000225458" description="Protein-glutamate methylesterase/protein-glutamine glutaminase 1">
    <location>
        <begin position="1"/>
        <end position="369"/>
    </location>
</feature>
<feature type="domain" description="Response regulatory" evidence="1">
    <location>
        <begin position="3"/>
        <end position="120"/>
    </location>
</feature>
<feature type="domain" description="CheB-type methylesterase" evidence="1">
    <location>
        <begin position="177"/>
        <end position="369"/>
    </location>
</feature>
<feature type="region of interest" description="Disordered" evidence="2">
    <location>
        <begin position="136"/>
        <end position="174"/>
    </location>
</feature>
<feature type="compositionally biased region" description="Low complexity" evidence="2">
    <location>
        <begin position="136"/>
        <end position="168"/>
    </location>
</feature>
<feature type="active site" evidence="1">
    <location>
        <position position="189"/>
    </location>
</feature>
<feature type="active site" evidence="1">
    <location>
        <position position="216"/>
    </location>
</feature>
<feature type="active site" evidence="1">
    <location>
        <position position="312"/>
    </location>
</feature>
<feature type="modified residue" description="4-aspartylphosphate" evidence="1">
    <location>
        <position position="54"/>
    </location>
</feature>
<reference key="1">
    <citation type="journal article" date="2011" name="J. Bacteriol.">
        <title>Complete genome sequence and updated annotation of Desulfovibrio alaskensis G20.</title>
        <authorList>
            <person name="Hauser L.J."/>
            <person name="Land M.L."/>
            <person name="Brown S.D."/>
            <person name="Larimer F."/>
            <person name="Keller K.L."/>
            <person name="Rapp-Giles B.J."/>
            <person name="Price M.N."/>
            <person name="Lin M."/>
            <person name="Bruce D.C."/>
            <person name="Detter J.C."/>
            <person name="Tapia R."/>
            <person name="Han C.S."/>
            <person name="Goodwin L.A."/>
            <person name="Cheng J.F."/>
            <person name="Pitluck S."/>
            <person name="Copeland A."/>
            <person name="Lucas S."/>
            <person name="Nolan M."/>
            <person name="Lapidus A.L."/>
            <person name="Palumbo A.V."/>
            <person name="Wall J.D."/>
        </authorList>
    </citation>
    <scope>NUCLEOTIDE SEQUENCE [LARGE SCALE GENOMIC DNA]</scope>
    <source>
        <strain>ATCC BAA-1058 / DSM 17464 / G20</strain>
    </source>
</reference>
<evidence type="ECO:0000255" key="1">
    <source>
        <dbReference type="HAMAP-Rule" id="MF_00099"/>
    </source>
</evidence>
<evidence type="ECO:0000256" key="2">
    <source>
        <dbReference type="SAM" id="MobiDB-lite"/>
    </source>
</evidence>